<keyword id="KW-0227">DNA damage</keyword>
<keyword id="KW-0234">DNA repair</keyword>
<keyword id="KW-0235">DNA replication</keyword>
<keyword id="KW-0255">Endonuclease</keyword>
<keyword id="KW-0269">Exonuclease</keyword>
<keyword id="KW-0378">Hydrolase</keyword>
<keyword id="KW-0460">Magnesium</keyword>
<keyword id="KW-0479">Metal-binding</keyword>
<keyword id="KW-0496">Mitochondrion</keyword>
<keyword id="KW-0540">Nuclease</keyword>
<keyword id="KW-0539">Nucleus</keyword>
<keyword id="KW-0597">Phosphoprotein</keyword>
<keyword id="KW-1185">Reference proteome</keyword>
<accession>B4HTA1</accession>
<feature type="chain" id="PRO_0000403504" description="Flap endonuclease 1">
    <location>
        <begin position="1"/>
        <end position="385"/>
    </location>
</feature>
<feature type="region of interest" description="N-domain">
    <location>
        <begin position="1"/>
        <end position="104"/>
    </location>
</feature>
<feature type="region of interest" description="I-domain">
    <location>
        <begin position="122"/>
        <end position="253"/>
    </location>
</feature>
<feature type="region of interest" description="Interaction with PCNA" evidence="1">
    <location>
        <begin position="336"/>
        <end position="344"/>
    </location>
</feature>
<feature type="region of interest" description="Disordered" evidence="2">
    <location>
        <begin position="346"/>
        <end position="385"/>
    </location>
</feature>
<feature type="compositionally biased region" description="Basic residues" evidence="2">
    <location>
        <begin position="368"/>
        <end position="385"/>
    </location>
</feature>
<feature type="binding site" evidence="1">
    <location>
        <position position="34"/>
    </location>
    <ligand>
        <name>Mg(2+)</name>
        <dbReference type="ChEBI" id="CHEBI:18420"/>
        <label>1</label>
    </ligand>
</feature>
<feature type="binding site" evidence="1">
    <location>
        <position position="47"/>
    </location>
    <ligand>
        <name>DNA</name>
        <dbReference type="ChEBI" id="CHEBI:16991"/>
    </ligand>
</feature>
<feature type="binding site" evidence="1">
    <location>
        <position position="70"/>
    </location>
    <ligand>
        <name>DNA</name>
        <dbReference type="ChEBI" id="CHEBI:16991"/>
    </ligand>
</feature>
<feature type="binding site" evidence="1">
    <location>
        <position position="86"/>
    </location>
    <ligand>
        <name>Mg(2+)</name>
        <dbReference type="ChEBI" id="CHEBI:18420"/>
        <label>1</label>
    </ligand>
</feature>
<feature type="binding site" evidence="1">
    <location>
        <position position="158"/>
    </location>
    <ligand>
        <name>DNA</name>
        <dbReference type="ChEBI" id="CHEBI:16991"/>
    </ligand>
</feature>
<feature type="binding site" evidence="1">
    <location>
        <position position="158"/>
    </location>
    <ligand>
        <name>Mg(2+)</name>
        <dbReference type="ChEBI" id="CHEBI:18420"/>
        <label>1</label>
    </ligand>
</feature>
<feature type="binding site" evidence="1">
    <location>
        <position position="160"/>
    </location>
    <ligand>
        <name>Mg(2+)</name>
        <dbReference type="ChEBI" id="CHEBI:18420"/>
        <label>1</label>
    </ligand>
</feature>
<feature type="binding site" evidence="1">
    <location>
        <position position="179"/>
    </location>
    <ligand>
        <name>Mg(2+)</name>
        <dbReference type="ChEBI" id="CHEBI:18420"/>
        <label>2</label>
    </ligand>
</feature>
<feature type="binding site" evidence="1">
    <location>
        <position position="181"/>
    </location>
    <ligand>
        <name>Mg(2+)</name>
        <dbReference type="ChEBI" id="CHEBI:18420"/>
        <label>2</label>
    </ligand>
</feature>
<feature type="binding site" evidence="1">
    <location>
        <position position="231"/>
    </location>
    <ligand>
        <name>DNA</name>
        <dbReference type="ChEBI" id="CHEBI:16991"/>
    </ligand>
</feature>
<feature type="binding site" evidence="1">
    <location>
        <position position="233"/>
    </location>
    <ligand>
        <name>DNA</name>
        <dbReference type="ChEBI" id="CHEBI:16991"/>
    </ligand>
</feature>
<feature type="binding site" evidence="1">
    <location>
        <position position="233"/>
    </location>
    <ligand>
        <name>Mg(2+)</name>
        <dbReference type="ChEBI" id="CHEBI:18420"/>
        <label>2</label>
    </ligand>
</feature>
<protein>
    <recommendedName>
        <fullName evidence="1">Flap endonuclease 1</fullName>
        <shortName evidence="1">FEN-1</shortName>
        <ecNumber evidence="1">3.1.-.-</ecNumber>
    </recommendedName>
    <alternativeName>
        <fullName evidence="1">Flap structure-specific endonuclease 1</fullName>
    </alternativeName>
</protein>
<sequence length="385" mass="42933">MGILGLSKLIADLAPQAIRESEMKHFFGRKVAIDASMCLYQFLIAVRSEGAQLATVNGDPTSHLMGMFYRTIRLLDNGIKPVYVFDGKPPDLKSGELAKRAERREEAEKALKAATDAGDDAGIEKFNRRLVRVTKEHAKEAKELLTLMGVPYVDAPCEAEAQCAALVKAGKVYATATEDMDALTFGSTKLLRYLTYSEARKMPVKEFSYDKLLEGLAINNREFIDLCILLGCDYCESIKGIGPKRAIELINTYRDIETILDNLDSSKYTVPENWNYKVARELFIEPEVANADSIDLKWVEPDEEGLVKFLCGDRQFNEERVRNGAKKLMKSKQAQTQVRLDSFFKTLPSTPNATNAAKRKADEAKKSANNKKAKTSGGGRGRRPK</sequence>
<comment type="function">
    <text evidence="1">Structure-specific nuclease with 5'-flap endonuclease and 5'-3' exonuclease activities involved in DNA replication and repair. During DNA replication, cleaves the 5'-overhanging flap structure that is generated by displacement synthesis when DNA polymerase encounters the 5'-end of a downstream Okazaki fragment. It enters the flap from the 5'-end and then tracks to cleave the flap base, leaving a nick for ligation. Also involved in the long patch base excision repair (LP-BER) pathway, by cleaving within the apurinic/apyrimidinic (AP) site-terminated flap. Acts as a genome stabilization factor that prevents flaps from equilibrating into structures that lead to duplications and deletions. Also possesses 5'-3' exonuclease activity on nicked or gapped double-stranded DNA, and exhibits RNase H activity. Also involved in replication and repair of rDNA and in repairing mitochondrial DNA.</text>
</comment>
<comment type="cofactor">
    <cofactor evidence="1">
        <name>Mg(2+)</name>
        <dbReference type="ChEBI" id="CHEBI:18420"/>
    </cofactor>
    <text evidence="1">Binds 2 magnesium ions per subunit. They probably participate in the reaction catalyzed by the enzyme. May bind an additional third magnesium ion after substrate binding.</text>
</comment>
<comment type="subunit">
    <text evidence="1">Interacts with PCNA. Three molecules of FEN1 bind to one PCNA trimer with each molecule binding to one PCNA monomer. PCNA stimulates the nuclease activity without altering cleavage specificity.</text>
</comment>
<comment type="subcellular location">
    <subcellularLocation>
        <location evidence="1">Nucleus</location>
        <location evidence="1">Nucleolus</location>
    </subcellularLocation>
    <subcellularLocation>
        <location evidence="1">Nucleus</location>
        <location evidence="1">Nucleoplasm</location>
    </subcellularLocation>
    <subcellularLocation>
        <location evidence="1">Mitochondrion</location>
    </subcellularLocation>
    <text evidence="1">Resides mostly in the nucleoli and relocalizes to the nucleoplasm upon DNA damage.</text>
</comment>
<comment type="PTM">
    <text evidence="1">Phosphorylated. Phosphorylation upon DNA damage induces relocalization to the nuclear plasma.</text>
</comment>
<comment type="similarity">
    <text evidence="1">Belongs to the XPG/RAD2 endonuclease family. FEN1 subfamily.</text>
</comment>
<reference key="1">
    <citation type="journal article" date="2007" name="Nature">
        <title>Evolution of genes and genomes on the Drosophila phylogeny.</title>
        <authorList>
            <consortium name="Drosophila 12 genomes consortium"/>
        </authorList>
    </citation>
    <scope>NUCLEOTIDE SEQUENCE [LARGE SCALE GENOMIC DNA]</scope>
    <source>
        <strain>Rob3c / Tucson 14021-0248.25</strain>
    </source>
</reference>
<name>FEN1_DROSE</name>
<proteinExistence type="inferred from homology"/>
<organism>
    <name type="scientific">Drosophila sechellia</name>
    <name type="common">Fruit fly</name>
    <dbReference type="NCBI Taxonomy" id="7238"/>
    <lineage>
        <taxon>Eukaryota</taxon>
        <taxon>Metazoa</taxon>
        <taxon>Ecdysozoa</taxon>
        <taxon>Arthropoda</taxon>
        <taxon>Hexapoda</taxon>
        <taxon>Insecta</taxon>
        <taxon>Pterygota</taxon>
        <taxon>Neoptera</taxon>
        <taxon>Endopterygota</taxon>
        <taxon>Diptera</taxon>
        <taxon>Brachycera</taxon>
        <taxon>Muscomorpha</taxon>
        <taxon>Ephydroidea</taxon>
        <taxon>Drosophilidae</taxon>
        <taxon>Drosophila</taxon>
        <taxon>Sophophora</taxon>
    </lineage>
</organism>
<dbReference type="EC" id="3.1.-.-" evidence="1"/>
<dbReference type="EMBL" id="CH480816">
    <property type="protein sequence ID" value="EDW48202.1"/>
    <property type="molecule type" value="Genomic_DNA"/>
</dbReference>
<dbReference type="SMR" id="B4HTA1"/>
<dbReference type="STRING" id="7238.B4HTA1"/>
<dbReference type="EnsemblMetazoa" id="FBtr0203011">
    <property type="protein sequence ID" value="FBpp0201503"/>
    <property type="gene ID" value="FBgn0174911"/>
</dbReference>
<dbReference type="EnsemblMetazoa" id="XM_002034153.2">
    <property type="protein sequence ID" value="XP_002034189.1"/>
    <property type="gene ID" value="LOC6609505"/>
</dbReference>
<dbReference type="GeneID" id="6609505"/>
<dbReference type="KEGG" id="dse:6609505"/>
<dbReference type="CTD" id="2237"/>
<dbReference type="HOGENOM" id="CLU_032444_2_0_1"/>
<dbReference type="OMA" id="MGIPWVQ"/>
<dbReference type="OrthoDB" id="38492at7215"/>
<dbReference type="PhylomeDB" id="B4HTA1"/>
<dbReference type="Proteomes" id="UP000001292">
    <property type="component" value="Unassembled WGS sequence"/>
</dbReference>
<dbReference type="GO" id="GO:0005739">
    <property type="term" value="C:mitochondrion"/>
    <property type="evidence" value="ECO:0007669"/>
    <property type="project" value="UniProtKB-SubCell"/>
</dbReference>
<dbReference type="GO" id="GO:0005730">
    <property type="term" value="C:nucleolus"/>
    <property type="evidence" value="ECO:0007669"/>
    <property type="project" value="UniProtKB-SubCell"/>
</dbReference>
<dbReference type="GO" id="GO:0005654">
    <property type="term" value="C:nucleoplasm"/>
    <property type="evidence" value="ECO:0007669"/>
    <property type="project" value="UniProtKB-SubCell"/>
</dbReference>
<dbReference type="GO" id="GO:0008409">
    <property type="term" value="F:5'-3' exonuclease activity"/>
    <property type="evidence" value="ECO:0007669"/>
    <property type="project" value="UniProtKB-UniRule"/>
</dbReference>
<dbReference type="GO" id="GO:0017108">
    <property type="term" value="F:5'-flap endonuclease activity"/>
    <property type="evidence" value="ECO:0007669"/>
    <property type="project" value="UniProtKB-UniRule"/>
</dbReference>
<dbReference type="GO" id="GO:0003677">
    <property type="term" value="F:DNA binding"/>
    <property type="evidence" value="ECO:0007669"/>
    <property type="project" value="UniProtKB-UniRule"/>
</dbReference>
<dbReference type="GO" id="GO:0000287">
    <property type="term" value="F:magnesium ion binding"/>
    <property type="evidence" value="ECO:0007669"/>
    <property type="project" value="UniProtKB-UniRule"/>
</dbReference>
<dbReference type="GO" id="GO:0030145">
    <property type="term" value="F:manganese ion binding"/>
    <property type="evidence" value="ECO:0007669"/>
    <property type="project" value="TreeGrafter"/>
</dbReference>
<dbReference type="GO" id="GO:0004523">
    <property type="term" value="F:RNA-DNA hybrid ribonuclease activity"/>
    <property type="evidence" value="ECO:0007669"/>
    <property type="project" value="TreeGrafter"/>
</dbReference>
<dbReference type="GO" id="GO:0006284">
    <property type="term" value="P:base-excision repair"/>
    <property type="evidence" value="ECO:0007669"/>
    <property type="project" value="UniProtKB-UniRule"/>
</dbReference>
<dbReference type="GO" id="GO:0043137">
    <property type="term" value="P:DNA replication, removal of RNA primer"/>
    <property type="evidence" value="ECO:0007669"/>
    <property type="project" value="UniProtKB-UniRule"/>
</dbReference>
<dbReference type="CDD" id="cd09867">
    <property type="entry name" value="PIN_FEN1"/>
    <property type="match status" value="1"/>
</dbReference>
<dbReference type="FunFam" id="1.10.150.20:FF:000009">
    <property type="entry name" value="Flap endonuclease 1"/>
    <property type="match status" value="1"/>
</dbReference>
<dbReference type="FunFam" id="3.40.50.1010:FF:000003">
    <property type="entry name" value="Flap endonuclease 1"/>
    <property type="match status" value="1"/>
</dbReference>
<dbReference type="Gene3D" id="1.10.150.20">
    <property type="entry name" value="5' to 3' exonuclease, C-terminal subdomain"/>
    <property type="match status" value="1"/>
</dbReference>
<dbReference type="Gene3D" id="3.40.50.1010">
    <property type="entry name" value="5'-nuclease"/>
    <property type="match status" value="1"/>
</dbReference>
<dbReference type="HAMAP" id="MF_00614">
    <property type="entry name" value="Fen"/>
    <property type="match status" value="1"/>
</dbReference>
<dbReference type="InterPro" id="IPR036279">
    <property type="entry name" value="5-3_exonuclease_C_sf"/>
</dbReference>
<dbReference type="InterPro" id="IPR023426">
    <property type="entry name" value="Flap_endonuc"/>
</dbReference>
<dbReference type="InterPro" id="IPR008918">
    <property type="entry name" value="HhH2"/>
</dbReference>
<dbReference type="InterPro" id="IPR029060">
    <property type="entry name" value="PIN-like_dom_sf"/>
</dbReference>
<dbReference type="InterPro" id="IPR006086">
    <property type="entry name" value="XPG-I_dom"/>
</dbReference>
<dbReference type="InterPro" id="IPR006084">
    <property type="entry name" value="XPG/Rad2"/>
</dbReference>
<dbReference type="InterPro" id="IPR019974">
    <property type="entry name" value="XPG_CS"/>
</dbReference>
<dbReference type="InterPro" id="IPR006085">
    <property type="entry name" value="XPG_DNA_repair_N"/>
</dbReference>
<dbReference type="PANTHER" id="PTHR11081:SF9">
    <property type="entry name" value="FLAP ENDONUCLEASE 1"/>
    <property type="match status" value="1"/>
</dbReference>
<dbReference type="PANTHER" id="PTHR11081">
    <property type="entry name" value="FLAP ENDONUCLEASE FAMILY MEMBER"/>
    <property type="match status" value="1"/>
</dbReference>
<dbReference type="Pfam" id="PF00867">
    <property type="entry name" value="XPG_I"/>
    <property type="match status" value="1"/>
</dbReference>
<dbReference type="Pfam" id="PF00752">
    <property type="entry name" value="XPG_N"/>
    <property type="match status" value="1"/>
</dbReference>
<dbReference type="PRINTS" id="PR00853">
    <property type="entry name" value="XPGRADSUPER"/>
</dbReference>
<dbReference type="SMART" id="SM00279">
    <property type="entry name" value="HhH2"/>
    <property type="match status" value="1"/>
</dbReference>
<dbReference type="SMART" id="SM00484">
    <property type="entry name" value="XPGI"/>
    <property type="match status" value="1"/>
</dbReference>
<dbReference type="SMART" id="SM00485">
    <property type="entry name" value="XPGN"/>
    <property type="match status" value="1"/>
</dbReference>
<dbReference type="SUPFAM" id="SSF47807">
    <property type="entry name" value="5' to 3' exonuclease, C-terminal subdomain"/>
    <property type="match status" value="1"/>
</dbReference>
<dbReference type="SUPFAM" id="SSF88723">
    <property type="entry name" value="PIN domain-like"/>
    <property type="match status" value="1"/>
</dbReference>
<dbReference type="PROSITE" id="PS00841">
    <property type="entry name" value="XPG_1"/>
    <property type="match status" value="1"/>
</dbReference>
<dbReference type="PROSITE" id="PS00842">
    <property type="entry name" value="XPG_2"/>
    <property type="match status" value="1"/>
</dbReference>
<evidence type="ECO:0000255" key="1">
    <source>
        <dbReference type="HAMAP-Rule" id="MF_03140"/>
    </source>
</evidence>
<evidence type="ECO:0000256" key="2">
    <source>
        <dbReference type="SAM" id="MobiDB-lite"/>
    </source>
</evidence>
<gene>
    <name evidence="1" type="primary">Fen1</name>
    <name type="ORF">GM20026</name>
</gene>